<feature type="chain" id="PRO_1000132829" description="Ribosomal protein L11 methyltransferase">
    <location>
        <begin position="1"/>
        <end position="317"/>
    </location>
</feature>
<feature type="binding site" evidence="1">
    <location>
        <position position="158"/>
    </location>
    <ligand>
        <name>S-adenosyl-L-methionine</name>
        <dbReference type="ChEBI" id="CHEBI:59789"/>
    </ligand>
</feature>
<feature type="binding site" evidence="1">
    <location>
        <position position="179"/>
    </location>
    <ligand>
        <name>S-adenosyl-L-methionine</name>
        <dbReference type="ChEBI" id="CHEBI:59789"/>
    </ligand>
</feature>
<feature type="binding site" evidence="1">
    <location>
        <position position="201"/>
    </location>
    <ligand>
        <name>S-adenosyl-L-methionine</name>
        <dbReference type="ChEBI" id="CHEBI:59789"/>
    </ligand>
</feature>
<feature type="binding site" evidence="1">
    <location>
        <position position="244"/>
    </location>
    <ligand>
        <name>S-adenosyl-L-methionine</name>
        <dbReference type="ChEBI" id="CHEBI:59789"/>
    </ligand>
</feature>
<sequence length="317" mass="34488">MKAWQELTITVHREAEEAVSNLLIEAGSQGVAINDTADYIGQEDRFGELYPAVEQSEMVTITAYYPSSADIDDIRQTINQGLNRLKQCDVELGELTLTNQELAEEDWADNWKAYYEPARITHDLTIVPSWTDYEATAGEKIIRLDPGMAFGTGTHPTTKLSLFALEQVLRGGETVIDVGTGSGVLSIASSLLGAKEVFAYDLDDVAVRVAKDNIALNQATDNIHVAAGDLLKGLTQEADVIVANILADILVHVTADAYRLIKSEGYLIMSGIISEKLDMVKQAALNAGFLLETHMLQGEWNALIFKKTDDLSGVIGG</sequence>
<keyword id="KW-0963">Cytoplasm</keyword>
<keyword id="KW-0489">Methyltransferase</keyword>
<keyword id="KW-0949">S-adenosyl-L-methionine</keyword>
<keyword id="KW-0808">Transferase</keyword>
<accession>B4U5A5</accession>
<proteinExistence type="inferred from homology"/>
<gene>
    <name evidence="1" type="primary">prmA</name>
    <name type="ordered locus">Sez_1789</name>
</gene>
<evidence type="ECO:0000255" key="1">
    <source>
        <dbReference type="HAMAP-Rule" id="MF_00735"/>
    </source>
</evidence>
<dbReference type="EC" id="2.1.1.-" evidence="1"/>
<dbReference type="EMBL" id="CP001129">
    <property type="protein sequence ID" value="ACG63116.1"/>
    <property type="molecule type" value="Genomic_DNA"/>
</dbReference>
<dbReference type="RefSeq" id="WP_012516366.1">
    <property type="nucleotide sequence ID" value="NC_011134.1"/>
</dbReference>
<dbReference type="SMR" id="B4U5A5"/>
<dbReference type="KEGG" id="sez:Sez_1789"/>
<dbReference type="HOGENOM" id="CLU_049382_0_1_9"/>
<dbReference type="Proteomes" id="UP000001873">
    <property type="component" value="Chromosome"/>
</dbReference>
<dbReference type="GO" id="GO:0005737">
    <property type="term" value="C:cytoplasm"/>
    <property type="evidence" value="ECO:0007669"/>
    <property type="project" value="UniProtKB-SubCell"/>
</dbReference>
<dbReference type="GO" id="GO:0016279">
    <property type="term" value="F:protein-lysine N-methyltransferase activity"/>
    <property type="evidence" value="ECO:0007669"/>
    <property type="project" value="RHEA"/>
</dbReference>
<dbReference type="GO" id="GO:0032259">
    <property type="term" value="P:methylation"/>
    <property type="evidence" value="ECO:0007669"/>
    <property type="project" value="UniProtKB-KW"/>
</dbReference>
<dbReference type="CDD" id="cd02440">
    <property type="entry name" value="AdoMet_MTases"/>
    <property type="match status" value="1"/>
</dbReference>
<dbReference type="Gene3D" id="3.40.50.150">
    <property type="entry name" value="Vaccinia Virus protein VP39"/>
    <property type="match status" value="1"/>
</dbReference>
<dbReference type="HAMAP" id="MF_00735">
    <property type="entry name" value="Methyltr_PrmA"/>
    <property type="match status" value="1"/>
</dbReference>
<dbReference type="InterPro" id="IPR050078">
    <property type="entry name" value="Ribosomal_L11_MeTrfase_PrmA"/>
</dbReference>
<dbReference type="InterPro" id="IPR004498">
    <property type="entry name" value="Ribosomal_PrmA_MeTrfase"/>
</dbReference>
<dbReference type="InterPro" id="IPR029063">
    <property type="entry name" value="SAM-dependent_MTases_sf"/>
</dbReference>
<dbReference type="NCBIfam" id="TIGR00406">
    <property type="entry name" value="prmA"/>
    <property type="match status" value="1"/>
</dbReference>
<dbReference type="PANTHER" id="PTHR43648">
    <property type="entry name" value="ELECTRON TRANSFER FLAVOPROTEIN BETA SUBUNIT LYSINE METHYLTRANSFERASE"/>
    <property type="match status" value="1"/>
</dbReference>
<dbReference type="PANTHER" id="PTHR43648:SF1">
    <property type="entry name" value="ELECTRON TRANSFER FLAVOPROTEIN BETA SUBUNIT LYSINE METHYLTRANSFERASE"/>
    <property type="match status" value="1"/>
</dbReference>
<dbReference type="Pfam" id="PF06325">
    <property type="entry name" value="PrmA"/>
    <property type="match status" value="1"/>
</dbReference>
<dbReference type="PIRSF" id="PIRSF000401">
    <property type="entry name" value="RPL11_MTase"/>
    <property type="match status" value="1"/>
</dbReference>
<dbReference type="SUPFAM" id="SSF53335">
    <property type="entry name" value="S-adenosyl-L-methionine-dependent methyltransferases"/>
    <property type="match status" value="1"/>
</dbReference>
<comment type="function">
    <text evidence="1">Methylates ribosomal protein L11.</text>
</comment>
<comment type="catalytic activity">
    <reaction evidence="1">
        <text>L-lysyl-[protein] + 3 S-adenosyl-L-methionine = N(6),N(6),N(6)-trimethyl-L-lysyl-[protein] + 3 S-adenosyl-L-homocysteine + 3 H(+)</text>
        <dbReference type="Rhea" id="RHEA:54192"/>
        <dbReference type="Rhea" id="RHEA-COMP:9752"/>
        <dbReference type="Rhea" id="RHEA-COMP:13826"/>
        <dbReference type="ChEBI" id="CHEBI:15378"/>
        <dbReference type="ChEBI" id="CHEBI:29969"/>
        <dbReference type="ChEBI" id="CHEBI:57856"/>
        <dbReference type="ChEBI" id="CHEBI:59789"/>
        <dbReference type="ChEBI" id="CHEBI:61961"/>
    </reaction>
</comment>
<comment type="subcellular location">
    <subcellularLocation>
        <location evidence="1">Cytoplasm</location>
    </subcellularLocation>
</comment>
<comment type="similarity">
    <text evidence="1">Belongs to the methyltransferase superfamily. PrmA family.</text>
</comment>
<organism>
    <name type="scientific">Streptococcus equi subsp. zooepidemicus (strain MGCS10565)</name>
    <dbReference type="NCBI Taxonomy" id="552526"/>
    <lineage>
        <taxon>Bacteria</taxon>
        <taxon>Bacillati</taxon>
        <taxon>Bacillota</taxon>
        <taxon>Bacilli</taxon>
        <taxon>Lactobacillales</taxon>
        <taxon>Streptococcaceae</taxon>
        <taxon>Streptococcus</taxon>
    </lineage>
</organism>
<protein>
    <recommendedName>
        <fullName evidence="1">Ribosomal protein L11 methyltransferase</fullName>
        <shortName evidence="1">L11 Mtase</shortName>
        <ecNumber evidence="1">2.1.1.-</ecNumber>
    </recommendedName>
</protein>
<reference key="1">
    <citation type="journal article" date="2008" name="PLoS ONE">
        <title>Genome sequence of a lancefield group C Streptococcus zooepidemicus strain causing epidemic nephritis: new information about an old disease.</title>
        <authorList>
            <person name="Beres S.B."/>
            <person name="Sesso R."/>
            <person name="Pinto S.W.L."/>
            <person name="Hoe N.P."/>
            <person name="Porcella S.F."/>
            <person name="Deleo F.R."/>
            <person name="Musser J.M."/>
        </authorList>
    </citation>
    <scope>NUCLEOTIDE SEQUENCE [LARGE SCALE GENOMIC DNA]</scope>
    <source>
        <strain>MGCS10565</strain>
    </source>
</reference>
<name>PRMA_STREM</name>